<feature type="chain" id="PRO_1000138868" description="Carbamoyl phosphate synthase small chain">
    <location>
        <begin position="1"/>
        <end position="366"/>
    </location>
</feature>
<feature type="domain" description="Glutamine amidotransferase type-1" evidence="1">
    <location>
        <begin position="172"/>
        <end position="363"/>
    </location>
</feature>
<feature type="region of interest" description="CPSase" evidence="1">
    <location>
        <begin position="1"/>
        <end position="168"/>
    </location>
</feature>
<feature type="active site" description="Nucleophile" evidence="1">
    <location>
        <position position="247"/>
    </location>
</feature>
<feature type="active site" evidence="1">
    <location>
        <position position="336"/>
    </location>
</feature>
<feature type="active site" evidence="1">
    <location>
        <position position="338"/>
    </location>
</feature>
<feature type="binding site" evidence="1">
    <location>
        <position position="45"/>
    </location>
    <ligand>
        <name>L-glutamine</name>
        <dbReference type="ChEBI" id="CHEBI:58359"/>
    </ligand>
</feature>
<feature type="binding site" evidence="1">
    <location>
        <position position="220"/>
    </location>
    <ligand>
        <name>L-glutamine</name>
        <dbReference type="ChEBI" id="CHEBI:58359"/>
    </ligand>
</feature>
<feature type="binding site" evidence="1">
    <location>
        <position position="222"/>
    </location>
    <ligand>
        <name>L-glutamine</name>
        <dbReference type="ChEBI" id="CHEBI:58359"/>
    </ligand>
</feature>
<feature type="binding site" evidence="1">
    <location>
        <position position="248"/>
    </location>
    <ligand>
        <name>L-glutamine</name>
        <dbReference type="ChEBI" id="CHEBI:58359"/>
    </ligand>
</feature>
<feature type="binding site" evidence="1">
    <location>
        <position position="251"/>
    </location>
    <ligand>
        <name>L-glutamine</name>
        <dbReference type="ChEBI" id="CHEBI:58359"/>
    </ligand>
</feature>
<feature type="binding site" evidence="1">
    <location>
        <position position="289"/>
    </location>
    <ligand>
        <name>L-glutamine</name>
        <dbReference type="ChEBI" id="CHEBI:58359"/>
    </ligand>
</feature>
<feature type="binding site" evidence="1">
    <location>
        <position position="291"/>
    </location>
    <ligand>
        <name>L-glutamine</name>
        <dbReference type="ChEBI" id="CHEBI:58359"/>
    </ligand>
</feature>
<feature type="binding site" evidence="1">
    <location>
        <position position="292"/>
    </location>
    <ligand>
        <name>L-glutamine</name>
        <dbReference type="ChEBI" id="CHEBI:58359"/>
    </ligand>
</feature>
<evidence type="ECO:0000255" key="1">
    <source>
        <dbReference type="HAMAP-Rule" id="MF_01209"/>
    </source>
</evidence>
<name>CARA_METM6</name>
<keyword id="KW-0028">Amino-acid biosynthesis</keyword>
<keyword id="KW-0055">Arginine biosynthesis</keyword>
<keyword id="KW-0067">ATP-binding</keyword>
<keyword id="KW-0315">Glutamine amidotransferase</keyword>
<keyword id="KW-0436">Ligase</keyword>
<keyword id="KW-0547">Nucleotide-binding</keyword>
<keyword id="KW-0665">Pyrimidine biosynthesis</keyword>
<reference key="1">
    <citation type="submission" date="2007-10" db="EMBL/GenBank/DDBJ databases">
        <title>Complete sequence of Methanococcus maripaludis C6.</title>
        <authorList>
            <consortium name="US DOE Joint Genome Institute"/>
            <person name="Copeland A."/>
            <person name="Lucas S."/>
            <person name="Lapidus A."/>
            <person name="Barry K."/>
            <person name="Glavina del Rio T."/>
            <person name="Dalin E."/>
            <person name="Tice H."/>
            <person name="Pitluck S."/>
            <person name="Clum A."/>
            <person name="Schmutz J."/>
            <person name="Larimer F."/>
            <person name="Land M."/>
            <person name="Hauser L."/>
            <person name="Kyrpides N."/>
            <person name="Mikhailova N."/>
            <person name="Sieprawska-Lupa M."/>
            <person name="Whitman W.B."/>
            <person name="Richardson P."/>
        </authorList>
    </citation>
    <scope>NUCLEOTIDE SEQUENCE [LARGE SCALE GENOMIC DNA]</scope>
    <source>
        <strain>C6 / ATCC BAA-1332</strain>
    </source>
</reference>
<accession>A9A972</accession>
<comment type="function">
    <text evidence="1">Small subunit of the glutamine-dependent carbamoyl phosphate synthetase (CPSase). CPSase catalyzes the formation of carbamoyl phosphate from the ammonia moiety of glutamine, carbonate, and phosphate donated by ATP, constituting the first step of 2 biosynthetic pathways, one leading to arginine and/or urea and the other to pyrimidine nucleotides. The small subunit (glutamine amidotransferase) binds and cleaves glutamine to supply the large subunit with the substrate ammonia.</text>
</comment>
<comment type="catalytic activity">
    <reaction evidence="1">
        <text>hydrogencarbonate + L-glutamine + 2 ATP + H2O = carbamoyl phosphate + L-glutamate + 2 ADP + phosphate + 2 H(+)</text>
        <dbReference type="Rhea" id="RHEA:18633"/>
        <dbReference type="ChEBI" id="CHEBI:15377"/>
        <dbReference type="ChEBI" id="CHEBI:15378"/>
        <dbReference type="ChEBI" id="CHEBI:17544"/>
        <dbReference type="ChEBI" id="CHEBI:29985"/>
        <dbReference type="ChEBI" id="CHEBI:30616"/>
        <dbReference type="ChEBI" id="CHEBI:43474"/>
        <dbReference type="ChEBI" id="CHEBI:58228"/>
        <dbReference type="ChEBI" id="CHEBI:58359"/>
        <dbReference type="ChEBI" id="CHEBI:456216"/>
        <dbReference type="EC" id="6.3.5.5"/>
    </reaction>
</comment>
<comment type="catalytic activity">
    <molecule>Carbamoyl phosphate synthase small chain</molecule>
    <reaction evidence="1">
        <text>L-glutamine + H2O = L-glutamate + NH4(+)</text>
        <dbReference type="Rhea" id="RHEA:15889"/>
        <dbReference type="ChEBI" id="CHEBI:15377"/>
        <dbReference type="ChEBI" id="CHEBI:28938"/>
        <dbReference type="ChEBI" id="CHEBI:29985"/>
        <dbReference type="ChEBI" id="CHEBI:58359"/>
    </reaction>
</comment>
<comment type="pathway">
    <text evidence="1">Amino-acid biosynthesis; L-arginine biosynthesis; carbamoyl phosphate from bicarbonate: step 1/1.</text>
</comment>
<comment type="pathway">
    <text evidence="1">Pyrimidine metabolism; UMP biosynthesis via de novo pathway; (S)-dihydroorotate from bicarbonate: step 1/3.</text>
</comment>
<comment type="subunit">
    <text evidence="1">Composed of two chains; the small (or glutamine) chain promotes the hydrolysis of glutamine to ammonia, which is used by the large (or ammonia) chain to synthesize carbamoyl phosphate. Tetramer of heterodimers (alpha,beta)4.</text>
</comment>
<comment type="similarity">
    <text evidence="1">Belongs to the CarA family.</text>
</comment>
<sequence length="366" mass="40410">MYGILVLEDGTIIRGDGFGAETEVLGELVFNTSMTGYVEILTDPSYKGQIVTMTYPLEGNYGVEKEWFESDGIKAEGFVVKDMTGLKLDEFLKEYNIPGISGVDTRYITRKIRSKGVIRSLLKTSTNPITKDEETELIKKVVEYPDISEIDLVPEVSTKETVVYSADDEKTKCVLIDCGVKQSIVNCLVERGCSVIKVPYNSKKEEILSYTPDFVLVSNGPGDPENMAETVDTVKNLIGTLPVTGICLGHQIITIALGGKTYKLKFGHRGGNQPVKDIESGKVYITSQNHGFATDDCVVPTGSELMHMNLNDDTVEGIRKIESEDLKNTVWSVQYHPEAGPGPHDARFLFDEMVELGIKFKAEKAN</sequence>
<gene>
    <name evidence="1" type="primary">carA</name>
    <name type="ordered locus">MmarC6_1081</name>
</gene>
<proteinExistence type="inferred from homology"/>
<organism>
    <name type="scientific">Methanococcus maripaludis (strain C6 / ATCC BAA-1332)</name>
    <dbReference type="NCBI Taxonomy" id="444158"/>
    <lineage>
        <taxon>Archaea</taxon>
        <taxon>Methanobacteriati</taxon>
        <taxon>Methanobacteriota</taxon>
        <taxon>Methanomada group</taxon>
        <taxon>Methanococci</taxon>
        <taxon>Methanococcales</taxon>
        <taxon>Methanococcaceae</taxon>
        <taxon>Methanococcus</taxon>
    </lineage>
</organism>
<protein>
    <recommendedName>
        <fullName evidence="1">Carbamoyl phosphate synthase small chain</fullName>
        <ecNumber evidence="1">6.3.5.5</ecNumber>
    </recommendedName>
    <alternativeName>
        <fullName evidence="1">Carbamoyl phosphate synthetase glutamine chain</fullName>
    </alternativeName>
</protein>
<dbReference type="EC" id="6.3.5.5" evidence="1"/>
<dbReference type="EMBL" id="CP000867">
    <property type="protein sequence ID" value="ABX01895.1"/>
    <property type="molecule type" value="Genomic_DNA"/>
</dbReference>
<dbReference type="SMR" id="A9A972"/>
<dbReference type="STRING" id="444158.MmarC6_1081"/>
<dbReference type="KEGG" id="mmx:MmarC6_1081"/>
<dbReference type="eggNOG" id="arCOG00064">
    <property type="taxonomic scope" value="Archaea"/>
</dbReference>
<dbReference type="HOGENOM" id="CLU_035901_2_1_2"/>
<dbReference type="OrthoDB" id="7675at2157"/>
<dbReference type="PhylomeDB" id="A9A972"/>
<dbReference type="UniPathway" id="UPA00068">
    <property type="reaction ID" value="UER00171"/>
</dbReference>
<dbReference type="UniPathway" id="UPA00070">
    <property type="reaction ID" value="UER00115"/>
</dbReference>
<dbReference type="GO" id="GO:0005524">
    <property type="term" value="F:ATP binding"/>
    <property type="evidence" value="ECO:0007669"/>
    <property type="project" value="UniProtKB-UniRule"/>
</dbReference>
<dbReference type="GO" id="GO:0004088">
    <property type="term" value="F:carbamoyl-phosphate synthase (glutamine-hydrolyzing) activity"/>
    <property type="evidence" value="ECO:0007669"/>
    <property type="project" value="UniProtKB-UniRule"/>
</dbReference>
<dbReference type="GO" id="GO:0004359">
    <property type="term" value="F:glutaminase activity"/>
    <property type="evidence" value="ECO:0007669"/>
    <property type="project" value="RHEA"/>
</dbReference>
<dbReference type="GO" id="GO:0006207">
    <property type="term" value="P:'de novo' pyrimidine nucleobase biosynthetic process"/>
    <property type="evidence" value="ECO:0007669"/>
    <property type="project" value="InterPro"/>
</dbReference>
<dbReference type="GO" id="GO:0044205">
    <property type="term" value="P:'de novo' UMP biosynthetic process"/>
    <property type="evidence" value="ECO:0007669"/>
    <property type="project" value="UniProtKB-UniRule"/>
</dbReference>
<dbReference type="GO" id="GO:0006541">
    <property type="term" value="P:glutamine metabolic process"/>
    <property type="evidence" value="ECO:0007669"/>
    <property type="project" value="InterPro"/>
</dbReference>
<dbReference type="GO" id="GO:0006526">
    <property type="term" value="P:L-arginine biosynthetic process"/>
    <property type="evidence" value="ECO:0007669"/>
    <property type="project" value="UniProtKB-UniRule"/>
</dbReference>
<dbReference type="CDD" id="cd01744">
    <property type="entry name" value="GATase1_CPSase"/>
    <property type="match status" value="1"/>
</dbReference>
<dbReference type="Gene3D" id="3.40.50.880">
    <property type="match status" value="1"/>
</dbReference>
<dbReference type="Gene3D" id="3.50.30.20">
    <property type="entry name" value="Carbamoyl-phosphate synthase small subunit, N-terminal domain"/>
    <property type="match status" value="1"/>
</dbReference>
<dbReference type="HAMAP" id="MF_01209">
    <property type="entry name" value="CPSase_S_chain"/>
    <property type="match status" value="1"/>
</dbReference>
<dbReference type="InterPro" id="IPR050472">
    <property type="entry name" value="Anth_synth/Amidotransfase"/>
</dbReference>
<dbReference type="InterPro" id="IPR006274">
    <property type="entry name" value="CarbamoylP_synth_ssu"/>
</dbReference>
<dbReference type="InterPro" id="IPR002474">
    <property type="entry name" value="CarbamoylP_synth_ssu_N"/>
</dbReference>
<dbReference type="InterPro" id="IPR036480">
    <property type="entry name" value="CarbP_synth_ssu_N_sf"/>
</dbReference>
<dbReference type="InterPro" id="IPR029062">
    <property type="entry name" value="Class_I_gatase-like"/>
</dbReference>
<dbReference type="InterPro" id="IPR035686">
    <property type="entry name" value="CPSase_GATase1"/>
</dbReference>
<dbReference type="InterPro" id="IPR017926">
    <property type="entry name" value="GATASE"/>
</dbReference>
<dbReference type="NCBIfam" id="TIGR01368">
    <property type="entry name" value="CPSaseIIsmall"/>
    <property type="match status" value="1"/>
</dbReference>
<dbReference type="NCBIfam" id="NF009475">
    <property type="entry name" value="PRK12838.1"/>
    <property type="match status" value="1"/>
</dbReference>
<dbReference type="PANTHER" id="PTHR43418:SF7">
    <property type="entry name" value="CARBAMOYL-PHOSPHATE SYNTHASE SMALL CHAIN"/>
    <property type="match status" value="1"/>
</dbReference>
<dbReference type="PANTHER" id="PTHR43418">
    <property type="entry name" value="MULTIFUNCTIONAL TRYPTOPHAN BIOSYNTHESIS PROTEIN-RELATED"/>
    <property type="match status" value="1"/>
</dbReference>
<dbReference type="Pfam" id="PF00988">
    <property type="entry name" value="CPSase_sm_chain"/>
    <property type="match status" value="1"/>
</dbReference>
<dbReference type="Pfam" id="PF00117">
    <property type="entry name" value="GATase"/>
    <property type="match status" value="1"/>
</dbReference>
<dbReference type="PRINTS" id="PR00097">
    <property type="entry name" value="ANTSNTHASEII"/>
</dbReference>
<dbReference type="PRINTS" id="PR00099">
    <property type="entry name" value="CPSGATASE"/>
</dbReference>
<dbReference type="PRINTS" id="PR00096">
    <property type="entry name" value="GATASE"/>
</dbReference>
<dbReference type="SMART" id="SM01097">
    <property type="entry name" value="CPSase_sm_chain"/>
    <property type="match status" value="1"/>
</dbReference>
<dbReference type="SUPFAM" id="SSF52021">
    <property type="entry name" value="Carbamoyl phosphate synthetase, small subunit N-terminal domain"/>
    <property type="match status" value="1"/>
</dbReference>
<dbReference type="SUPFAM" id="SSF52317">
    <property type="entry name" value="Class I glutamine amidotransferase-like"/>
    <property type="match status" value="1"/>
</dbReference>
<dbReference type="PROSITE" id="PS51273">
    <property type="entry name" value="GATASE_TYPE_1"/>
    <property type="match status" value="1"/>
</dbReference>